<proteinExistence type="inferred from homology"/>
<sequence>MSLPATFDLTPEDAQLLLAANVHLGSKNVQVHQEPYLYKTRPDGVNIIHIGKTWEKIVLAARIIAAIPNAEDVVAISSRTYGQRAVLKFSAHTGATAIAGRFTPGSFTNYITRSFKEPRLVIVTDPRSDAQAIKEASYVNIPVIALTDLESPSEYVDVAIPCNNRGKHSIGLIWYLLAREVLRLRGALVDRTQPWSIMPDLYFYRDPEEIEQQAAEEAAAGEEDDEAKEEVAAEEQTEAADWAEGQSEEVASW</sequence>
<feature type="initiator methionine" description="Removed" evidence="1">
    <location>
        <position position="1"/>
    </location>
</feature>
<feature type="chain" id="PRO_0000371617" description="Small ribosomal subunit protein uS2">
    <location>
        <begin position="2"/>
        <end position="253"/>
    </location>
</feature>
<feature type="region of interest" description="Disordered" evidence="2">
    <location>
        <begin position="212"/>
        <end position="253"/>
    </location>
</feature>
<feature type="compositionally biased region" description="Acidic residues" evidence="2">
    <location>
        <begin position="219"/>
        <end position="238"/>
    </location>
</feature>
<feature type="modified residue" description="N-acetylserine" evidence="1">
    <location>
        <position position="2"/>
    </location>
</feature>
<dbReference type="EMBL" id="AE016816">
    <property type="protein sequence ID" value="AAS51088.1"/>
    <property type="molecule type" value="Genomic_DNA"/>
</dbReference>
<dbReference type="RefSeq" id="NP_983264.1">
    <property type="nucleotide sequence ID" value="NM_208617.1"/>
</dbReference>
<dbReference type="SMR" id="Q75CQ9"/>
<dbReference type="FunCoup" id="Q75CQ9">
    <property type="interactions" value="1434"/>
</dbReference>
<dbReference type="STRING" id="284811.Q75CQ9"/>
<dbReference type="EnsemblFungi" id="AAS51088">
    <property type="protein sequence ID" value="AAS51088"/>
    <property type="gene ID" value="AGOS_ACL140C"/>
</dbReference>
<dbReference type="GeneID" id="4619384"/>
<dbReference type="KEGG" id="ago:AGOS_ACL140C"/>
<dbReference type="eggNOG" id="KOG0830">
    <property type="taxonomic scope" value="Eukaryota"/>
</dbReference>
<dbReference type="HOGENOM" id="CLU_058171_2_0_1"/>
<dbReference type="InParanoid" id="Q75CQ9"/>
<dbReference type="OMA" id="VKNFFEP"/>
<dbReference type="OrthoDB" id="414863at2759"/>
<dbReference type="Proteomes" id="UP000000591">
    <property type="component" value="Chromosome III"/>
</dbReference>
<dbReference type="GO" id="GO:0022627">
    <property type="term" value="C:cytosolic small ribosomal subunit"/>
    <property type="evidence" value="ECO:0000318"/>
    <property type="project" value="GO_Central"/>
</dbReference>
<dbReference type="GO" id="GO:0003735">
    <property type="term" value="F:structural constituent of ribosome"/>
    <property type="evidence" value="ECO:0000318"/>
    <property type="project" value="GO_Central"/>
</dbReference>
<dbReference type="GO" id="GO:0002181">
    <property type="term" value="P:cytoplasmic translation"/>
    <property type="evidence" value="ECO:0000318"/>
    <property type="project" value="GO_Central"/>
</dbReference>
<dbReference type="GO" id="GO:0000028">
    <property type="term" value="P:ribosomal small subunit assembly"/>
    <property type="evidence" value="ECO:0000318"/>
    <property type="project" value="GO_Central"/>
</dbReference>
<dbReference type="CDD" id="cd01425">
    <property type="entry name" value="RPS2"/>
    <property type="match status" value="1"/>
</dbReference>
<dbReference type="FunFam" id="3.40.50.10490:FF:000010">
    <property type="entry name" value="40S ribosomal protein S0"/>
    <property type="match status" value="1"/>
</dbReference>
<dbReference type="Gene3D" id="3.40.50.10490">
    <property type="entry name" value="Glucose-6-phosphate isomerase like protein, domain 1"/>
    <property type="match status" value="1"/>
</dbReference>
<dbReference type="HAMAP" id="MF_03015">
    <property type="entry name" value="Ribosomal_S2_euk"/>
    <property type="match status" value="1"/>
</dbReference>
<dbReference type="InterPro" id="IPR001865">
    <property type="entry name" value="Ribosomal_uS2"/>
</dbReference>
<dbReference type="InterPro" id="IPR018130">
    <property type="entry name" value="Ribosomal_uS2_CS"/>
</dbReference>
<dbReference type="InterPro" id="IPR027498">
    <property type="entry name" value="Ribosomal_uS2_euk"/>
</dbReference>
<dbReference type="InterPro" id="IPR005707">
    <property type="entry name" value="Ribosomal_uS2_euk/arc"/>
</dbReference>
<dbReference type="InterPro" id="IPR023591">
    <property type="entry name" value="Ribosomal_uS2_flav_dom_sf"/>
</dbReference>
<dbReference type="NCBIfam" id="TIGR01012">
    <property type="entry name" value="uS2_euk_arch"/>
    <property type="match status" value="1"/>
</dbReference>
<dbReference type="PANTHER" id="PTHR11489">
    <property type="entry name" value="40S RIBOSOMAL PROTEIN SA"/>
    <property type="match status" value="1"/>
</dbReference>
<dbReference type="Pfam" id="PF00318">
    <property type="entry name" value="Ribosomal_S2"/>
    <property type="match status" value="2"/>
</dbReference>
<dbReference type="PRINTS" id="PR00395">
    <property type="entry name" value="RIBOSOMALS2"/>
</dbReference>
<dbReference type="SUPFAM" id="SSF52313">
    <property type="entry name" value="Ribosomal protein S2"/>
    <property type="match status" value="1"/>
</dbReference>
<dbReference type="PROSITE" id="PS00962">
    <property type="entry name" value="RIBOSOMAL_S2_1"/>
    <property type="match status" value="1"/>
</dbReference>
<dbReference type="PROSITE" id="PS00963">
    <property type="entry name" value="RIBOSOMAL_S2_2"/>
    <property type="match status" value="1"/>
</dbReference>
<protein>
    <recommendedName>
        <fullName evidence="1">Small ribosomal subunit protein uS2</fullName>
    </recommendedName>
    <alternativeName>
        <fullName evidence="3">40S ribosomal protein S0</fullName>
    </alternativeName>
</protein>
<organism>
    <name type="scientific">Eremothecium gossypii (strain ATCC 10895 / CBS 109.51 / FGSC 9923 / NRRL Y-1056)</name>
    <name type="common">Yeast</name>
    <name type="synonym">Ashbya gossypii</name>
    <dbReference type="NCBI Taxonomy" id="284811"/>
    <lineage>
        <taxon>Eukaryota</taxon>
        <taxon>Fungi</taxon>
        <taxon>Dikarya</taxon>
        <taxon>Ascomycota</taxon>
        <taxon>Saccharomycotina</taxon>
        <taxon>Saccharomycetes</taxon>
        <taxon>Saccharomycetales</taxon>
        <taxon>Saccharomycetaceae</taxon>
        <taxon>Eremothecium</taxon>
    </lineage>
</organism>
<reference key="1">
    <citation type="journal article" date="2004" name="Science">
        <title>The Ashbya gossypii genome as a tool for mapping the ancient Saccharomyces cerevisiae genome.</title>
        <authorList>
            <person name="Dietrich F.S."/>
            <person name="Voegeli S."/>
            <person name="Brachat S."/>
            <person name="Lerch A."/>
            <person name="Gates K."/>
            <person name="Steiner S."/>
            <person name="Mohr C."/>
            <person name="Poehlmann R."/>
            <person name="Luedi P."/>
            <person name="Choi S."/>
            <person name="Wing R.A."/>
            <person name="Flavier A."/>
            <person name="Gaffney T.D."/>
            <person name="Philippsen P."/>
        </authorList>
    </citation>
    <scope>NUCLEOTIDE SEQUENCE [LARGE SCALE GENOMIC DNA]</scope>
    <source>
        <strain>ATCC 10895 / CBS 109.51 / FGSC 9923 / NRRL Y-1056</strain>
    </source>
</reference>
<reference key="2">
    <citation type="journal article" date="2013" name="G3 (Bethesda)">
        <title>Genomes of Ashbya fungi isolated from insects reveal four mating-type loci, numerous translocations, lack of transposons, and distinct gene duplications.</title>
        <authorList>
            <person name="Dietrich F.S."/>
            <person name="Voegeli S."/>
            <person name="Kuo S."/>
            <person name="Philippsen P."/>
        </authorList>
    </citation>
    <scope>GENOME REANNOTATION</scope>
    <source>
        <strain>ATCC 10895 / CBS 109.51 / FGSC 9923 / NRRL Y-1056</strain>
    </source>
</reference>
<name>RSSA_EREGS</name>
<gene>
    <name evidence="1" type="primary">RPS0</name>
    <name type="ordered locus">ACL140C</name>
</gene>
<evidence type="ECO:0000255" key="1">
    <source>
        <dbReference type="HAMAP-Rule" id="MF_03015"/>
    </source>
</evidence>
<evidence type="ECO:0000256" key="2">
    <source>
        <dbReference type="SAM" id="MobiDB-lite"/>
    </source>
</evidence>
<evidence type="ECO:0000305" key="3"/>
<keyword id="KW-0007">Acetylation</keyword>
<keyword id="KW-0963">Cytoplasm</keyword>
<keyword id="KW-1185">Reference proteome</keyword>
<keyword id="KW-0687">Ribonucleoprotein</keyword>
<keyword id="KW-0689">Ribosomal protein</keyword>
<comment type="function">
    <text evidence="1">Required for the assembly and/or stability of the 40S ribosomal subunit. Required for the processing of the 20S rRNA-precursor to mature 18S rRNA in a late step of the maturation of 40S ribosomal subunits.</text>
</comment>
<comment type="subunit">
    <text evidence="1">Component of the small ribosomal subunit. Mature ribosomes consist of a small (40S) and a large (60S) subunit. The 40S subunit contains about 33 different proteins and 1 molecule of RNA (18S). The 60S subunit contains about 49 different proteins and 3 molecules of RNA (25S, 5.8S and 5S). Interacts with RPS21.</text>
</comment>
<comment type="subcellular location">
    <subcellularLocation>
        <location evidence="1">Cytoplasm</location>
    </subcellularLocation>
</comment>
<comment type="similarity">
    <text evidence="1">Belongs to the universal ribosomal protein uS2 family.</text>
</comment>
<accession>Q75CQ9</accession>